<name>SMP13_NAUMA</name>
<feature type="chain" id="PRO_0000371494" description="Uncharacterized protein SMPP13">
    <location>
        <begin position="1" status="less than"/>
        <end position="10" status="greater than"/>
    </location>
</feature>
<feature type="non-terminal residue" evidence="2">
    <location>
        <position position="1"/>
    </location>
</feature>
<feature type="non-terminal residue" evidence="2">
    <location>
        <position position="10"/>
    </location>
</feature>
<sequence>TSTVFSDGQR</sequence>
<organism>
    <name type="scientific">Nautilus macromphalus</name>
    <name type="common">Bellybutton nautilus</name>
    <dbReference type="NCBI Taxonomy" id="34576"/>
    <lineage>
        <taxon>Eukaryota</taxon>
        <taxon>Metazoa</taxon>
        <taxon>Spiralia</taxon>
        <taxon>Lophotrochozoa</taxon>
        <taxon>Mollusca</taxon>
        <taxon>Cephalopoda</taxon>
        <taxon>Nautiloidea</taxon>
        <taxon>Nautilida</taxon>
        <taxon>Nautilidae</taxon>
        <taxon>Nautilus</taxon>
    </lineage>
</organism>
<keyword id="KW-0903">Direct protein sequencing</keyword>
<reference key="1">
    <citation type="journal article" date="2009" name="ChemBioChem">
        <title>Evolution of nacre: biochemistry and 'shellomics' of the shell organic matrix of the cephalopod Nautilus macromphalus.</title>
        <authorList>
            <person name="Marie B."/>
            <person name="Marin F."/>
            <person name="Marie A."/>
            <person name="Bedouet L."/>
            <person name="Dubost L."/>
            <person name="Alcaraz G."/>
            <person name="Milet C."/>
            <person name="Luquet G."/>
        </authorList>
    </citation>
    <scope>PROTEIN SEQUENCE</scope>
    <scope>TISSUE SPECIFICITY</scope>
    <source>
        <tissue>Shell</tissue>
    </source>
</reference>
<protein>
    <recommendedName>
        <fullName evidence="2">Uncharacterized protein SMPP13</fullName>
    </recommendedName>
</protein>
<proteinExistence type="evidence at protein level"/>
<evidence type="ECO:0000269" key="1">
    <source>
    </source>
</evidence>
<evidence type="ECO:0000303" key="2">
    <source>
    </source>
</evidence>
<comment type="tissue specificity">
    <text evidence="1">Nacreous layer of shell.</text>
</comment>
<accession>P85378</accession>